<evidence type="ECO:0000255" key="1">
    <source>
        <dbReference type="HAMAP-Rule" id="MF_00060"/>
    </source>
</evidence>
<reference key="1">
    <citation type="submission" date="2006-08" db="EMBL/GenBank/DDBJ databases">
        <title>Complete sequence of chromosome 1 of Shewanella sp. MR-7.</title>
        <authorList>
            <person name="Copeland A."/>
            <person name="Lucas S."/>
            <person name="Lapidus A."/>
            <person name="Barry K."/>
            <person name="Detter J.C."/>
            <person name="Glavina del Rio T."/>
            <person name="Hammon N."/>
            <person name="Israni S."/>
            <person name="Dalin E."/>
            <person name="Tice H."/>
            <person name="Pitluck S."/>
            <person name="Kiss H."/>
            <person name="Brettin T."/>
            <person name="Bruce D."/>
            <person name="Han C."/>
            <person name="Tapia R."/>
            <person name="Gilna P."/>
            <person name="Schmutz J."/>
            <person name="Larimer F."/>
            <person name="Land M."/>
            <person name="Hauser L."/>
            <person name="Kyrpides N."/>
            <person name="Mikhailova N."/>
            <person name="Nealson K."/>
            <person name="Konstantinidis K."/>
            <person name="Klappenbach J."/>
            <person name="Tiedje J."/>
            <person name="Richardson P."/>
        </authorList>
    </citation>
    <scope>NUCLEOTIDE SEQUENCE [LARGE SCALE GENOMIC DNA]</scope>
    <source>
        <strain>MR-7</strain>
    </source>
</reference>
<organism>
    <name type="scientific">Shewanella sp. (strain MR-7)</name>
    <dbReference type="NCBI Taxonomy" id="60481"/>
    <lineage>
        <taxon>Bacteria</taxon>
        <taxon>Pseudomonadati</taxon>
        <taxon>Pseudomonadota</taxon>
        <taxon>Gammaproteobacteria</taxon>
        <taxon>Alteromonadales</taxon>
        <taxon>Shewanellaceae</taxon>
        <taxon>Shewanella</taxon>
    </lineage>
</organism>
<protein>
    <recommendedName>
        <fullName evidence="1">5'-nucleotidase SurE</fullName>
        <ecNumber evidence="1">3.1.3.5</ecNumber>
    </recommendedName>
    <alternativeName>
        <fullName evidence="1">Nucleoside 5'-monophosphate phosphohydrolase</fullName>
    </alternativeName>
</protein>
<dbReference type="EC" id="3.1.3.5" evidence="1"/>
<dbReference type="EMBL" id="CP000444">
    <property type="protein sequence ID" value="ABI42190.1"/>
    <property type="molecule type" value="Genomic_DNA"/>
</dbReference>
<dbReference type="SMR" id="Q0HXG5"/>
<dbReference type="KEGG" id="shm:Shewmr7_1191"/>
<dbReference type="HOGENOM" id="CLU_045192_1_2_6"/>
<dbReference type="GO" id="GO:0005737">
    <property type="term" value="C:cytoplasm"/>
    <property type="evidence" value="ECO:0007669"/>
    <property type="project" value="UniProtKB-SubCell"/>
</dbReference>
<dbReference type="GO" id="GO:0008254">
    <property type="term" value="F:3'-nucleotidase activity"/>
    <property type="evidence" value="ECO:0007669"/>
    <property type="project" value="TreeGrafter"/>
</dbReference>
<dbReference type="GO" id="GO:0008253">
    <property type="term" value="F:5'-nucleotidase activity"/>
    <property type="evidence" value="ECO:0007669"/>
    <property type="project" value="UniProtKB-UniRule"/>
</dbReference>
<dbReference type="GO" id="GO:0004309">
    <property type="term" value="F:exopolyphosphatase activity"/>
    <property type="evidence" value="ECO:0007669"/>
    <property type="project" value="TreeGrafter"/>
</dbReference>
<dbReference type="GO" id="GO:0046872">
    <property type="term" value="F:metal ion binding"/>
    <property type="evidence" value="ECO:0007669"/>
    <property type="project" value="UniProtKB-UniRule"/>
</dbReference>
<dbReference type="GO" id="GO:0000166">
    <property type="term" value="F:nucleotide binding"/>
    <property type="evidence" value="ECO:0007669"/>
    <property type="project" value="UniProtKB-KW"/>
</dbReference>
<dbReference type="FunFam" id="3.40.1210.10:FF:000001">
    <property type="entry name" value="5'/3'-nucleotidase SurE"/>
    <property type="match status" value="1"/>
</dbReference>
<dbReference type="Gene3D" id="3.40.1210.10">
    <property type="entry name" value="Survival protein SurE-like phosphatase/nucleotidase"/>
    <property type="match status" value="1"/>
</dbReference>
<dbReference type="HAMAP" id="MF_00060">
    <property type="entry name" value="SurE"/>
    <property type="match status" value="1"/>
</dbReference>
<dbReference type="InterPro" id="IPR030048">
    <property type="entry name" value="SurE"/>
</dbReference>
<dbReference type="InterPro" id="IPR002828">
    <property type="entry name" value="SurE-like_Pase/nucleotidase"/>
</dbReference>
<dbReference type="InterPro" id="IPR036523">
    <property type="entry name" value="SurE-like_sf"/>
</dbReference>
<dbReference type="NCBIfam" id="NF001489">
    <property type="entry name" value="PRK00346.1-3"/>
    <property type="match status" value="1"/>
</dbReference>
<dbReference type="NCBIfam" id="NF001490">
    <property type="entry name" value="PRK00346.1-4"/>
    <property type="match status" value="1"/>
</dbReference>
<dbReference type="NCBIfam" id="TIGR00087">
    <property type="entry name" value="surE"/>
    <property type="match status" value="1"/>
</dbReference>
<dbReference type="PANTHER" id="PTHR30457">
    <property type="entry name" value="5'-NUCLEOTIDASE SURE"/>
    <property type="match status" value="1"/>
</dbReference>
<dbReference type="PANTHER" id="PTHR30457:SF12">
    <property type="entry name" value="5'_3'-NUCLEOTIDASE SURE"/>
    <property type="match status" value="1"/>
</dbReference>
<dbReference type="Pfam" id="PF01975">
    <property type="entry name" value="SurE"/>
    <property type="match status" value="1"/>
</dbReference>
<dbReference type="SUPFAM" id="SSF64167">
    <property type="entry name" value="SurE-like"/>
    <property type="match status" value="1"/>
</dbReference>
<keyword id="KW-0963">Cytoplasm</keyword>
<keyword id="KW-0378">Hydrolase</keyword>
<keyword id="KW-0479">Metal-binding</keyword>
<keyword id="KW-0547">Nucleotide-binding</keyword>
<comment type="function">
    <text evidence="1">Nucleotidase that shows phosphatase activity on nucleoside 5'-monophosphates.</text>
</comment>
<comment type="catalytic activity">
    <reaction evidence="1">
        <text>a ribonucleoside 5'-phosphate + H2O = a ribonucleoside + phosphate</text>
        <dbReference type="Rhea" id="RHEA:12484"/>
        <dbReference type="ChEBI" id="CHEBI:15377"/>
        <dbReference type="ChEBI" id="CHEBI:18254"/>
        <dbReference type="ChEBI" id="CHEBI:43474"/>
        <dbReference type="ChEBI" id="CHEBI:58043"/>
        <dbReference type="EC" id="3.1.3.5"/>
    </reaction>
</comment>
<comment type="cofactor">
    <cofactor evidence="1">
        <name>a divalent metal cation</name>
        <dbReference type="ChEBI" id="CHEBI:60240"/>
    </cofactor>
    <text evidence="1">Binds 1 divalent metal cation per subunit.</text>
</comment>
<comment type="subcellular location">
    <subcellularLocation>
        <location evidence="1">Cytoplasm</location>
    </subcellularLocation>
</comment>
<comment type="similarity">
    <text evidence="1">Belongs to the SurE nucleotidase family.</text>
</comment>
<sequence>MIRILVSNDDGVNAPGIKALTEALAEIATVMTVAPDRNCSGASNSLTLTNPLRINRLDNGYISVHGTPTDCVHLAIRELCDGEPDMVVSGINAGANMGDDTLYSGTVAAAMEGRFLGFPAVAISLNGKALKHYHSAAVYARRIVQGLLAHPIASDQILNINVPDLPLDEIKGIRVTRLGARHKAEGIVRTQDPAGREIFWLGPPGVEQDASEGTDFHAIAHGYVSITPLTVDLTAYRQLSVLQDWVDKI</sequence>
<proteinExistence type="inferred from homology"/>
<feature type="chain" id="PRO_0000335281" description="5'-nucleotidase SurE">
    <location>
        <begin position="1"/>
        <end position="249"/>
    </location>
</feature>
<feature type="binding site" evidence="1">
    <location>
        <position position="9"/>
    </location>
    <ligand>
        <name>a divalent metal cation</name>
        <dbReference type="ChEBI" id="CHEBI:60240"/>
    </ligand>
</feature>
<feature type="binding site" evidence="1">
    <location>
        <position position="10"/>
    </location>
    <ligand>
        <name>a divalent metal cation</name>
        <dbReference type="ChEBI" id="CHEBI:60240"/>
    </ligand>
</feature>
<feature type="binding site" evidence="1">
    <location>
        <position position="40"/>
    </location>
    <ligand>
        <name>a divalent metal cation</name>
        <dbReference type="ChEBI" id="CHEBI:60240"/>
    </ligand>
</feature>
<feature type="binding site" evidence="1">
    <location>
        <position position="92"/>
    </location>
    <ligand>
        <name>a divalent metal cation</name>
        <dbReference type="ChEBI" id="CHEBI:60240"/>
    </ligand>
</feature>
<gene>
    <name evidence="1" type="primary">surE</name>
    <name type="ordered locus">Shewmr7_1191</name>
</gene>
<name>SURE_SHESR</name>
<accession>Q0HXG5</accession>